<evidence type="ECO:0000255" key="1">
    <source>
        <dbReference type="HAMAP-Rule" id="MF_00627"/>
    </source>
</evidence>
<keyword id="KW-0963">Cytoplasm</keyword>
<keyword id="KW-0479">Metal-binding</keyword>
<keyword id="KW-0520">NAD</keyword>
<keyword id="KW-0560">Oxidoreductase</keyword>
<keyword id="KW-0862">Zinc</keyword>
<protein>
    <recommendedName>
        <fullName evidence="1">L-threonine 3-dehydrogenase</fullName>
        <shortName evidence="1">TDH</shortName>
        <ecNumber evidence="1">1.1.1.103</ecNumber>
    </recommendedName>
</protein>
<comment type="function">
    <text evidence="1">Catalyzes the NAD(+)-dependent oxidation of L-threonine to 2-amino-3-ketobutyrate.</text>
</comment>
<comment type="catalytic activity">
    <reaction evidence="1">
        <text>L-threonine + NAD(+) = (2S)-2-amino-3-oxobutanoate + NADH + H(+)</text>
        <dbReference type="Rhea" id="RHEA:13161"/>
        <dbReference type="ChEBI" id="CHEBI:15378"/>
        <dbReference type="ChEBI" id="CHEBI:57540"/>
        <dbReference type="ChEBI" id="CHEBI:57926"/>
        <dbReference type="ChEBI" id="CHEBI:57945"/>
        <dbReference type="ChEBI" id="CHEBI:78948"/>
        <dbReference type="EC" id="1.1.1.103"/>
    </reaction>
</comment>
<comment type="cofactor">
    <cofactor evidence="1">
        <name>Zn(2+)</name>
        <dbReference type="ChEBI" id="CHEBI:29105"/>
    </cofactor>
    <text evidence="1">Binds 2 Zn(2+) ions per subunit.</text>
</comment>
<comment type="pathway">
    <text evidence="1">Amino-acid degradation; L-threonine degradation via oxydo-reductase pathway; glycine from L-threonine: step 1/2.</text>
</comment>
<comment type="subunit">
    <text evidence="1">Homotetramer.</text>
</comment>
<comment type="subcellular location">
    <subcellularLocation>
        <location evidence="1">Cytoplasm</location>
    </subcellularLocation>
</comment>
<comment type="similarity">
    <text evidence="1">Belongs to the zinc-containing alcohol dehydrogenase family.</text>
</comment>
<accession>Q0BKV5</accession>
<gene>
    <name evidence="1" type="primary">tdh</name>
    <name type="ordered locus">FTH_1473</name>
</gene>
<dbReference type="EC" id="1.1.1.103" evidence="1"/>
<dbReference type="EMBL" id="CP000437">
    <property type="protein sequence ID" value="ABI83279.1"/>
    <property type="molecule type" value="Genomic_DNA"/>
</dbReference>
<dbReference type="RefSeq" id="WP_003016849.1">
    <property type="nucleotide sequence ID" value="NC_017463.1"/>
</dbReference>
<dbReference type="SMR" id="Q0BKV5"/>
<dbReference type="KEGG" id="fth:FTH_1473"/>
<dbReference type="UniPathway" id="UPA00046">
    <property type="reaction ID" value="UER00505"/>
</dbReference>
<dbReference type="GO" id="GO:0005737">
    <property type="term" value="C:cytoplasm"/>
    <property type="evidence" value="ECO:0007669"/>
    <property type="project" value="UniProtKB-SubCell"/>
</dbReference>
<dbReference type="GO" id="GO:0008743">
    <property type="term" value="F:L-threonine 3-dehydrogenase activity"/>
    <property type="evidence" value="ECO:0007669"/>
    <property type="project" value="UniProtKB-UniRule"/>
</dbReference>
<dbReference type="GO" id="GO:0008270">
    <property type="term" value="F:zinc ion binding"/>
    <property type="evidence" value="ECO:0007669"/>
    <property type="project" value="UniProtKB-UniRule"/>
</dbReference>
<dbReference type="GO" id="GO:0019518">
    <property type="term" value="P:L-threonine catabolic process to glycine"/>
    <property type="evidence" value="ECO:0007669"/>
    <property type="project" value="UniProtKB-UniPathway"/>
</dbReference>
<dbReference type="Gene3D" id="3.90.180.10">
    <property type="entry name" value="Medium-chain alcohol dehydrogenases, catalytic domain"/>
    <property type="match status" value="1"/>
</dbReference>
<dbReference type="Gene3D" id="3.40.50.720">
    <property type="entry name" value="NAD(P)-binding Rossmann-like Domain"/>
    <property type="match status" value="1"/>
</dbReference>
<dbReference type="HAMAP" id="MF_00627">
    <property type="entry name" value="Thr_dehydrog"/>
    <property type="match status" value="1"/>
</dbReference>
<dbReference type="InterPro" id="IPR013149">
    <property type="entry name" value="ADH-like_C"/>
</dbReference>
<dbReference type="InterPro" id="IPR013154">
    <property type="entry name" value="ADH-like_N"/>
</dbReference>
<dbReference type="InterPro" id="IPR002328">
    <property type="entry name" value="ADH_Zn_CS"/>
</dbReference>
<dbReference type="InterPro" id="IPR011032">
    <property type="entry name" value="GroES-like_sf"/>
</dbReference>
<dbReference type="InterPro" id="IPR004627">
    <property type="entry name" value="L-Threonine_3-DHase"/>
</dbReference>
<dbReference type="InterPro" id="IPR036291">
    <property type="entry name" value="NAD(P)-bd_dom_sf"/>
</dbReference>
<dbReference type="InterPro" id="IPR050129">
    <property type="entry name" value="Zn_alcohol_dh"/>
</dbReference>
<dbReference type="NCBIfam" id="NF003808">
    <property type="entry name" value="PRK05396.1"/>
    <property type="match status" value="1"/>
</dbReference>
<dbReference type="NCBIfam" id="TIGR00692">
    <property type="entry name" value="tdh"/>
    <property type="match status" value="1"/>
</dbReference>
<dbReference type="PANTHER" id="PTHR43401">
    <property type="entry name" value="L-THREONINE 3-DEHYDROGENASE"/>
    <property type="match status" value="1"/>
</dbReference>
<dbReference type="PANTHER" id="PTHR43401:SF2">
    <property type="entry name" value="L-THREONINE 3-DEHYDROGENASE"/>
    <property type="match status" value="1"/>
</dbReference>
<dbReference type="Pfam" id="PF08240">
    <property type="entry name" value="ADH_N"/>
    <property type="match status" value="1"/>
</dbReference>
<dbReference type="Pfam" id="PF00107">
    <property type="entry name" value="ADH_zinc_N"/>
    <property type="match status" value="1"/>
</dbReference>
<dbReference type="SUPFAM" id="SSF50129">
    <property type="entry name" value="GroES-like"/>
    <property type="match status" value="1"/>
</dbReference>
<dbReference type="SUPFAM" id="SSF51735">
    <property type="entry name" value="NAD(P)-binding Rossmann-fold domains"/>
    <property type="match status" value="1"/>
</dbReference>
<dbReference type="PROSITE" id="PS00059">
    <property type="entry name" value="ADH_ZINC"/>
    <property type="match status" value="1"/>
</dbReference>
<organism>
    <name type="scientific">Francisella tularensis subsp. holarctica (strain OSU18)</name>
    <dbReference type="NCBI Taxonomy" id="393011"/>
    <lineage>
        <taxon>Bacteria</taxon>
        <taxon>Pseudomonadati</taxon>
        <taxon>Pseudomonadota</taxon>
        <taxon>Gammaproteobacteria</taxon>
        <taxon>Thiotrichales</taxon>
        <taxon>Francisellaceae</taxon>
        <taxon>Francisella</taxon>
    </lineage>
</organism>
<proteinExistence type="inferred from homology"/>
<feature type="chain" id="PRO_1000051640" description="L-threonine 3-dehydrogenase">
    <location>
        <begin position="1"/>
        <end position="351"/>
    </location>
</feature>
<feature type="active site" description="Charge relay system" evidence="1">
    <location>
        <position position="41"/>
    </location>
</feature>
<feature type="active site" description="Charge relay system" evidence="1">
    <location>
        <position position="44"/>
    </location>
</feature>
<feature type="binding site" evidence="1">
    <location>
        <position position="39"/>
    </location>
    <ligand>
        <name>Zn(2+)</name>
        <dbReference type="ChEBI" id="CHEBI:29105"/>
        <label>1</label>
        <note>catalytic</note>
    </ligand>
</feature>
<feature type="binding site" evidence="1">
    <location>
        <position position="64"/>
    </location>
    <ligand>
        <name>Zn(2+)</name>
        <dbReference type="ChEBI" id="CHEBI:29105"/>
        <label>1</label>
        <note>catalytic</note>
    </ligand>
</feature>
<feature type="binding site" evidence="1">
    <location>
        <position position="65"/>
    </location>
    <ligand>
        <name>Zn(2+)</name>
        <dbReference type="ChEBI" id="CHEBI:29105"/>
        <label>1</label>
        <note>catalytic</note>
    </ligand>
</feature>
<feature type="binding site" evidence="1">
    <location>
        <position position="94"/>
    </location>
    <ligand>
        <name>Zn(2+)</name>
        <dbReference type="ChEBI" id="CHEBI:29105"/>
        <label>2</label>
    </ligand>
</feature>
<feature type="binding site" evidence="1">
    <location>
        <position position="97"/>
    </location>
    <ligand>
        <name>Zn(2+)</name>
        <dbReference type="ChEBI" id="CHEBI:29105"/>
        <label>2</label>
    </ligand>
</feature>
<feature type="binding site" evidence="1">
    <location>
        <position position="100"/>
    </location>
    <ligand>
        <name>Zn(2+)</name>
        <dbReference type="ChEBI" id="CHEBI:29105"/>
        <label>2</label>
    </ligand>
</feature>
<feature type="binding site" evidence="1">
    <location>
        <position position="108"/>
    </location>
    <ligand>
        <name>Zn(2+)</name>
        <dbReference type="ChEBI" id="CHEBI:29105"/>
        <label>2</label>
    </ligand>
</feature>
<feature type="binding site" evidence="1">
    <location>
        <position position="176"/>
    </location>
    <ligand>
        <name>NAD(+)</name>
        <dbReference type="ChEBI" id="CHEBI:57540"/>
    </ligand>
</feature>
<feature type="binding site" evidence="1">
    <location>
        <position position="196"/>
    </location>
    <ligand>
        <name>NAD(+)</name>
        <dbReference type="ChEBI" id="CHEBI:57540"/>
    </ligand>
</feature>
<feature type="binding site" evidence="1">
    <location>
        <position position="201"/>
    </location>
    <ligand>
        <name>NAD(+)</name>
        <dbReference type="ChEBI" id="CHEBI:57540"/>
    </ligand>
</feature>
<feature type="binding site" evidence="1">
    <location>
        <begin position="271"/>
        <end position="273"/>
    </location>
    <ligand>
        <name>NAD(+)</name>
        <dbReference type="ChEBI" id="CHEBI:57540"/>
    </ligand>
</feature>
<feature type="binding site" evidence="1">
    <location>
        <begin position="295"/>
        <end position="296"/>
    </location>
    <ligand>
        <name>NAD(+)</name>
        <dbReference type="ChEBI" id="CHEBI:57540"/>
    </ligand>
</feature>
<feature type="site" description="Important for catalytic activity for the proton relay mechanism but does not participate directly in the coordination of zinc atom" evidence="1">
    <location>
        <position position="149"/>
    </location>
</feature>
<reference key="1">
    <citation type="journal article" date="2006" name="J. Bacteriol.">
        <title>Chromosome rearrangement and diversification of Francisella tularensis revealed by the type B (OSU18) genome sequence.</title>
        <authorList>
            <person name="Petrosino J.F."/>
            <person name="Xiang Q."/>
            <person name="Karpathy S.E."/>
            <person name="Jiang H."/>
            <person name="Yerrapragada S."/>
            <person name="Liu Y."/>
            <person name="Gioia J."/>
            <person name="Hemphill L."/>
            <person name="Gonzalez A."/>
            <person name="Raghavan T.M."/>
            <person name="Uzman A."/>
            <person name="Fox G.E."/>
            <person name="Highlander S."/>
            <person name="Reichard M."/>
            <person name="Morton R.J."/>
            <person name="Clinkenbeard K.D."/>
            <person name="Weinstock G.M."/>
        </authorList>
    </citation>
    <scope>NUCLEOTIDE SEQUENCE [LARGE SCALE GENOMIC DNA]</scope>
    <source>
        <strain>OSU18</strain>
    </source>
</reference>
<sequence>MKALAKLKKQPGIWMINDAPIPEYGYNDVLIKIKKTAICGTDLHIYNWDKWSQNTIPVPMITGHEFAGEVVAKGDGVTSVDIGDRVSGEGHLVCGQCRNCRAGKRHLCRKTIGIGVNVQGAFAEYLVMPAVNVFKIPDSISDDIASTFDPMGNAIHTALSFNLTGEDVLITGAGPIGLMAVKIARFCGARRIVITDINEYRLQMARDFGATVALNVAPFKNQDELVKQMRKVMSDIGMTEGFDVGLEMSGINSAISMMLDVMNHGGKLSLLGISAGDISVDWGAILFKGLTLKGIYGREMFETWYLMTSMLQAGMDMNPIITHRLHIDEFQKGFEIMKSGQCGKVILDWSS</sequence>
<name>TDH_FRATO</name>